<gene>
    <name type="ordered locus">YPO0462</name>
    <name type="ordered locus">y3714</name>
    <name type="ordered locus">YP_3720</name>
</gene>
<accession>Q8ZIN3</accession>
<accession>Q0WJK4</accession>
<accession>Q8CZP3</accession>
<proteinExistence type="inferred from homology"/>
<comment type="similarity">
    <text evidence="1">Belongs to the UPF0246 family.</text>
</comment>
<comment type="sequence caution" evidence="2">
    <conflict type="erroneous initiation">
        <sequence resource="EMBL-CDS" id="AAM87262"/>
    </conflict>
</comment>
<comment type="sequence caution" evidence="2">
    <conflict type="erroneous initiation">
        <sequence resource="EMBL-CDS" id="AAS63868"/>
    </conflict>
</comment>
<sequence>MLIIISPAKTLDYQSPLATTKFSQPEMLDKSQALIEICRELTPAQISSLMGISDKLAGLNAARFSEWQPDFTPANARQAILAFKGDVYTGMQAESFSEADFDFAQQHLRMLSGLYGLLRPLDLMQPYRLEMGTKLANPRGKDLYAFWGDQITEKLNQALELQGDNILINLASDEYFKAVKPAKLSGSLIKPVFLDEKNGKYKIISFYAKKARGLMSRFIIQNKLTKPEQLVDFNLEGYEFDAGLSAKNELVFKRAEQH</sequence>
<dbReference type="EMBL" id="AL590842">
    <property type="protein sequence ID" value="CAL19141.1"/>
    <property type="molecule type" value="Genomic_DNA"/>
</dbReference>
<dbReference type="EMBL" id="AE009952">
    <property type="protein sequence ID" value="AAM87262.1"/>
    <property type="status" value="ALT_INIT"/>
    <property type="molecule type" value="Genomic_DNA"/>
</dbReference>
<dbReference type="EMBL" id="AE017042">
    <property type="protein sequence ID" value="AAS63868.1"/>
    <property type="status" value="ALT_INIT"/>
    <property type="molecule type" value="Genomic_DNA"/>
</dbReference>
<dbReference type="PIR" id="AC0057">
    <property type="entry name" value="AC0057"/>
</dbReference>
<dbReference type="RefSeq" id="YP_002345534.1">
    <property type="nucleotide sequence ID" value="NC_003143.1"/>
</dbReference>
<dbReference type="SMR" id="Q8ZIN3"/>
<dbReference type="STRING" id="214092.YPO0462"/>
<dbReference type="PaxDb" id="214092-YPO0462"/>
<dbReference type="DNASU" id="1148661"/>
<dbReference type="EnsemblBacteria" id="AAS63868">
    <property type="protein sequence ID" value="AAS63868"/>
    <property type="gene ID" value="YP_3720"/>
</dbReference>
<dbReference type="KEGG" id="ype:YPO0462"/>
<dbReference type="KEGG" id="ypk:y3714"/>
<dbReference type="KEGG" id="ypm:YP_3720"/>
<dbReference type="PATRIC" id="fig|214092.21.peg.708"/>
<dbReference type="eggNOG" id="COG3022">
    <property type="taxonomic scope" value="Bacteria"/>
</dbReference>
<dbReference type="HOGENOM" id="CLU_061989_0_0_6"/>
<dbReference type="OMA" id="WKNGQYK"/>
<dbReference type="OrthoDB" id="9777133at2"/>
<dbReference type="Proteomes" id="UP000000815">
    <property type="component" value="Chromosome"/>
</dbReference>
<dbReference type="Proteomes" id="UP000001019">
    <property type="component" value="Chromosome"/>
</dbReference>
<dbReference type="Proteomes" id="UP000002490">
    <property type="component" value="Chromosome"/>
</dbReference>
<dbReference type="GO" id="GO:0005829">
    <property type="term" value="C:cytosol"/>
    <property type="evidence" value="ECO:0000318"/>
    <property type="project" value="GO_Central"/>
</dbReference>
<dbReference type="GO" id="GO:0033194">
    <property type="term" value="P:response to hydroperoxide"/>
    <property type="evidence" value="ECO:0000318"/>
    <property type="project" value="GO_Central"/>
</dbReference>
<dbReference type="HAMAP" id="MF_00652">
    <property type="entry name" value="UPF0246"/>
    <property type="match status" value="1"/>
</dbReference>
<dbReference type="InterPro" id="IPR005583">
    <property type="entry name" value="YaaA"/>
</dbReference>
<dbReference type="NCBIfam" id="NF002541">
    <property type="entry name" value="PRK02101.1-1"/>
    <property type="match status" value="1"/>
</dbReference>
<dbReference type="NCBIfam" id="NF002542">
    <property type="entry name" value="PRK02101.1-3"/>
    <property type="match status" value="1"/>
</dbReference>
<dbReference type="PANTHER" id="PTHR30283:SF4">
    <property type="entry name" value="PEROXIDE STRESS RESISTANCE PROTEIN YAAA"/>
    <property type="match status" value="1"/>
</dbReference>
<dbReference type="PANTHER" id="PTHR30283">
    <property type="entry name" value="PEROXIDE STRESS RESPONSE PROTEIN YAAA"/>
    <property type="match status" value="1"/>
</dbReference>
<dbReference type="Pfam" id="PF03883">
    <property type="entry name" value="H2O2_YaaD"/>
    <property type="match status" value="1"/>
</dbReference>
<name>Y462_YERPE</name>
<organism>
    <name type="scientific">Yersinia pestis</name>
    <dbReference type="NCBI Taxonomy" id="632"/>
    <lineage>
        <taxon>Bacteria</taxon>
        <taxon>Pseudomonadati</taxon>
        <taxon>Pseudomonadota</taxon>
        <taxon>Gammaproteobacteria</taxon>
        <taxon>Enterobacterales</taxon>
        <taxon>Yersiniaceae</taxon>
        <taxon>Yersinia</taxon>
    </lineage>
</organism>
<evidence type="ECO:0000255" key="1">
    <source>
        <dbReference type="HAMAP-Rule" id="MF_00652"/>
    </source>
</evidence>
<evidence type="ECO:0000305" key="2"/>
<reference key="1">
    <citation type="journal article" date="2001" name="Nature">
        <title>Genome sequence of Yersinia pestis, the causative agent of plague.</title>
        <authorList>
            <person name="Parkhill J."/>
            <person name="Wren B.W."/>
            <person name="Thomson N.R."/>
            <person name="Titball R.W."/>
            <person name="Holden M.T.G."/>
            <person name="Prentice M.B."/>
            <person name="Sebaihia M."/>
            <person name="James K.D."/>
            <person name="Churcher C.M."/>
            <person name="Mungall K.L."/>
            <person name="Baker S."/>
            <person name="Basham D."/>
            <person name="Bentley S.D."/>
            <person name="Brooks K."/>
            <person name="Cerdeno-Tarraga A.-M."/>
            <person name="Chillingworth T."/>
            <person name="Cronin A."/>
            <person name="Davies R.M."/>
            <person name="Davis P."/>
            <person name="Dougan G."/>
            <person name="Feltwell T."/>
            <person name="Hamlin N."/>
            <person name="Holroyd S."/>
            <person name="Jagels K."/>
            <person name="Karlyshev A.V."/>
            <person name="Leather S."/>
            <person name="Moule S."/>
            <person name="Oyston P.C.F."/>
            <person name="Quail M.A."/>
            <person name="Rutherford K.M."/>
            <person name="Simmonds M."/>
            <person name="Skelton J."/>
            <person name="Stevens K."/>
            <person name="Whitehead S."/>
            <person name="Barrell B.G."/>
        </authorList>
    </citation>
    <scope>NUCLEOTIDE SEQUENCE [LARGE SCALE GENOMIC DNA]</scope>
    <source>
        <strain>CO-92 / Biovar Orientalis</strain>
    </source>
</reference>
<reference key="2">
    <citation type="journal article" date="2002" name="J. Bacteriol.">
        <title>Genome sequence of Yersinia pestis KIM.</title>
        <authorList>
            <person name="Deng W."/>
            <person name="Burland V."/>
            <person name="Plunkett G. III"/>
            <person name="Boutin A."/>
            <person name="Mayhew G.F."/>
            <person name="Liss P."/>
            <person name="Perna N.T."/>
            <person name="Rose D.J."/>
            <person name="Mau B."/>
            <person name="Zhou S."/>
            <person name="Schwartz D.C."/>
            <person name="Fetherston J.D."/>
            <person name="Lindler L.E."/>
            <person name="Brubaker R.R."/>
            <person name="Plano G.V."/>
            <person name="Straley S.C."/>
            <person name="McDonough K.A."/>
            <person name="Nilles M.L."/>
            <person name="Matson J.S."/>
            <person name="Blattner F.R."/>
            <person name="Perry R.D."/>
        </authorList>
    </citation>
    <scope>NUCLEOTIDE SEQUENCE [LARGE SCALE GENOMIC DNA]</scope>
    <source>
        <strain>KIM10+ / Biovar Mediaevalis</strain>
    </source>
</reference>
<reference key="3">
    <citation type="journal article" date="2004" name="DNA Res.">
        <title>Complete genome sequence of Yersinia pestis strain 91001, an isolate avirulent to humans.</title>
        <authorList>
            <person name="Song Y."/>
            <person name="Tong Z."/>
            <person name="Wang J."/>
            <person name="Wang L."/>
            <person name="Guo Z."/>
            <person name="Han Y."/>
            <person name="Zhang J."/>
            <person name="Pei D."/>
            <person name="Zhou D."/>
            <person name="Qin H."/>
            <person name="Pang X."/>
            <person name="Han Y."/>
            <person name="Zhai J."/>
            <person name="Li M."/>
            <person name="Cui B."/>
            <person name="Qi Z."/>
            <person name="Jin L."/>
            <person name="Dai R."/>
            <person name="Chen F."/>
            <person name="Li S."/>
            <person name="Ye C."/>
            <person name="Du Z."/>
            <person name="Lin W."/>
            <person name="Wang J."/>
            <person name="Yu J."/>
            <person name="Yang H."/>
            <person name="Wang J."/>
            <person name="Huang P."/>
            <person name="Yang R."/>
        </authorList>
    </citation>
    <scope>NUCLEOTIDE SEQUENCE [LARGE SCALE GENOMIC DNA]</scope>
    <source>
        <strain>91001 / Biovar Mediaevalis</strain>
    </source>
</reference>
<keyword id="KW-1185">Reference proteome</keyword>
<protein>
    <recommendedName>
        <fullName evidence="1">UPF0246 protein YPO0462/y3714/YP_3720</fullName>
    </recommendedName>
</protein>
<feature type="chain" id="PRO_0000204019" description="UPF0246 protein YPO0462/y3714/YP_3720">
    <location>
        <begin position="1"/>
        <end position="258"/>
    </location>
</feature>